<evidence type="ECO:0000269" key="1">
    <source>
    </source>
</evidence>
<evidence type="ECO:0000269" key="2">
    <source>
    </source>
</evidence>
<evidence type="ECO:0000303" key="3">
    <source>
    </source>
</evidence>
<evidence type="ECO:0000303" key="4">
    <source>
    </source>
</evidence>
<evidence type="ECO:0000305" key="5"/>
<evidence type="ECO:0000305" key="6">
    <source>
    </source>
</evidence>
<evidence type="ECO:0000305" key="7">
    <source>
    </source>
</evidence>
<accession>Q58822</accession>
<feature type="chain" id="PRO_0000107320" description="Beta-ribofuranosylphenol 5'-phosphate synthase">
    <location>
        <begin position="1"/>
        <end position="328"/>
    </location>
</feature>
<reference key="1">
    <citation type="journal article" date="1996" name="Science">
        <title>Complete genome sequence of the methanogenic archaeon, Methanococcus jannaschii.</title>
        <authorList>
            <person name="Bult C.J."/>
            <person name="White O."/>
            <person name="Olsen G.J."/>
            <person name="Zhou L."/>
            <person name="Fleischmann R.D."/>
            <person name="Sutton G.G."/>
            <person name="Blake J.A."/>
            <person name="FitzGerald L.M."/>
            <person name="Clayton R.A."/>
            <person name="Gocayne J.D."/>
            <person name="Kerlavage A.R."/>
            <person name="Dougherty B.A."/>
            <person name="Tomb J.-F."/>
            <person name="Adams M.D."/>
            <person name="Reich C.I."/>
            <person name="Overbeek R."/>
            <person name="Kirkness E.F."/>
            <person name="Weinstock K.G."/>
            <person name="Merrick J.M."/>
            <person name="Glodek A."/>
            <person name="Scott J.L."/>
            <person name="Geoghagen N.S.M."/>
            <person name="Weidman J.F."/>
            <person name="Fuhrmann J.L."/>
            <person name="Nguyen D."/>
            <person name="Utterback T.R."/>
            <person name="Kelley J.M."/>
            <person name="Peterson J.D."/>
            <person name="Sadow P.W."/>
            <person name="Hanna M.C."/>
            <person name="Cotton M.D."/>
            <person name="Roberts K.M."/>
            <person name="Hurst M.A."/>
            <person name="Kaine B.P."/>
            <person name="Borodovsky M."/>
            <person name="Klenk H.-P."/>
            <person name="Fraser C.M."/>
            <person name="Smith H.O."/>
            <person name="Woese C.R."/>
            <person name="Venter J.C."/>
        </authorList>
    </citation>
    <scope>NUCLEOTIDE SEQUENCE [LARGE SCALE GENOMIC DNA]</scope>
    <source>
        <strain>ATCC 43067 / DSM 2661 / JAL-1 / JCM 10045 / NBRC 100440</strain>
    </source>
</reference>
<reference key="2">
    <citation type="journal article" date="2004" name="J. Biol. Chem.">
        <title>Mechanism of 4-(beta-D-ribofuranosyl)aminobenzene 5'-phosphate synthase, a key enzyme in the methanopterin biosynthetic pathway.</title>
        <authorList>
            <person name="Dumitru R.V."/>
            <person name="Ragsdale S.W."/>
        </authorList>
    </citation>
    <scope>FUNCTION</scope>
    <scope>CATALYTIC ACTIVITY</scope>
    <scope>ENZYME MECHANISM</scope>
    <scope>COFACTOR</scope>
    <scope>BIOPHYSICOCHEMICAL PROPERTIES</scope>
    <scope>PATHWAY</scope>
    <scope>SUBUNIT</scope>
</reference>
<reference key="3">
    <citation type="journal article" date="2011" name="Biochemistry">
        <title>The conversion of a phenol to an aniline occurs in the biochemical formation of the 1-(4-aminophenyl)-1-deoxy-D-ribitol moiety in methanopterin.</title>
        <authorList>
            <person name="White R.H."/>
        </authorList>
    </citation>
    <scope>FUNCTION</scope>
    <scope>CATALYTIC ACTIVITY</scope>
    <scope>PATHWAY</scope>
</reference>
<comment type="function">
    <text evidence="1 2">Catalyzes the condensation of 4-hydroxybenzoate (HB) with 5-phospho-alpha-D-ribose 1-diphosphate (PRPP) to produce beta-ribofuranosylphenol 5'-phosphate (beta-RFH-P) (PubMed:21634403). Also catalyzes the condensation of 4-aminobenzoate (pABA) with PRPP to produce beta-ribofuranosylaminobenzene 5'-phosphate (beta-RFA-P) (PubMed:15262968, PubMed:21634403). Only 4-hydroxybenzoate is known to be biosynthesized by methanogenic archaea, but 4-aminobenzoate can be used as substrate by growing methanogens when it is present in the growth medium (PubMed:21634403).</text>
</comment>
<comment type="catalytic activity">
    <reaction evidence="2">
        <text>5-phospho-alpha-D-ribose 1-diphosphate + 4-hydroxybenzoate + H(+) = 4-(beta-D-ribofuranosyl)phenol 5'-phosphate + CO2 + diphosphate</text>
        <dbReference type="Rhea" id="RHEA:48556"/>
        <dbReference type="ChEBI" id="CHEBI:15378"/>
        <dbReference type="ChEBI" id="CHEBI:16526"/>
        <dbReference type="ChEBI" id="CHEBI:17879"/>
        <dbReference type="ChEBI" id="CHEBI:33019"/>
        <dbReference type="ChEBI" id="CHEBI:58017"/>
        <dbReference type="ChEBI" id="CHEBI:82767"/>
        <dbReference type="EC" id="2.4.2.54"/>
    </reaction>
    <physiologicalReaction direction="left-to-right" evidence="2">
        <dbReference type="Rhea" id="RHEA:48557"/>
    </physiologicalReaction>
</comment>
<comment type="catalytic activity">
    <reaction evidence="1 2">
        <text>4-aminobenzoate + 5-phospho-alpha-D-ribose 1-diphosphate + H(+) = 4-(beta-D-ribofuranosyl)aminobenzene 5'-phosphate + CO2 + diphosphate</text>
        <dbReference type="Rhea" id="RHEA:35815"/>
        <dbReference type="ChEBI" id="CHEBI:15378"/>
        <dbReference type="ChEBI" id="CHEBI:16526"/>
        <dbReference type="ChEBI" id="CHEBI:17836"/>
        <dbReference type="ChEBI" id="CHEBI:33019"/>
        <dbReference type="ChEBI" id="CHEBI:58017"/>
        <dbReference type="ChEBI" id="CHEBI:72778"/>
    </reaction>
    <physiologicalReaction direction="left-to-right" evidence="1 2">
        <dbReference type="Rhea" id="RHEA:35816"/>
    </physiologicalReaction>
</comment>
<comment type="cofactor">
    <cofactor evidence="1">
        <name>Mg(2+)</name>
        <dbReference type="ChEBI" id="CHEBI:18420"/>
    </cofactor>
</comment>
<comment type="biophysicochemical properties">
    <kinetics>
        <KM evidence="1">1.5 mM for PRPP</KM>
        <KM evidence="1">0.15 mM for pABA</KM>
        <Vmax evidence="1">180.0 nmol/min/mg enzyme with pABA as substrate</Vmax>
        <text evidence="1">kcat is 0.23 sec(-1) with pABA as substrate.</text>
    </kinetics>
    <phDependence>
        <text evidence="1">Optimum pH is 4.9.</text>
    </phDependence>
</comment>
<comment type="pathway">
    <text evidence="6 7">Cofactor biosynthesis; 5,6,7,8-tetrahydromethanopterin biosynthesis.</text>
</comment>
<comment type="subunit">
    <text evidence="1">Homodimer.</text>
</comment>
<comment type="miscellaneous">
    <text evidence="1">Lacks any chromogenic cofactor, and the presence of pyridoxal phosphate and the mechanistically related pyruvoyl cofactors has been strictly excluded.</text>
</comment>
<comment type="similarity">
    <text evidence="5">Belongs to the beta-RFA-P synthase family.</text>
</comment>
<name>RFHPS_METJA</name>
<organism>
    <name type="scientific">Methanocaldococcus jannaschii (strain ATCC 43067 / DSM 2661 / JAL-1 / JCM 10045 / NBRC 100440)</name>
    <name type="common">Methanococcus jannaschii</name>
    <dbReference type="NCBI Taxonomy" id="243232"/>
    <lineage>
        <taxon>Archaea</taxon>
        <taxon>Methanobacteriati</taxon>
        <taxon>Methanobacteriota</taxon>
        <taxon>Methanomada group</taxon>
        <taxon>Methanococci</taxon>
        <taxon>Methanococcales</taxon>
        <taxon>Methanocaldococcaceae</taxon>
        <taxon>Methanocaldococcus</taxon>
    </lineage>
</organism>
<proteinExistence type="evidence at protein level"/>
<dbReference type="EC" id="2.4.2.54" evidence="2"/>
<dbReference type="EMBL" id="L77117">
    <property type="protein sequence ID" value="AAB99449.1"/>
    <property type="molecule type" value="Genomic_DNA"/>
</dbReference>
<dbReference type="PIR" id="B64478">
    <property type="entry name" value="B64478"/>
</dbReference>
<dbReference type="RefSeq" id="WP_010870945.1">
    <property type="nucleotide sequence ID" value="NC_000909.1"/>
</dbReference>
<dbReference type="SMR" id="Q58822"/>
<dbReference type="FunCoup" id="Q58822">
    <property type="interactions" value="1"/>
</dbReference>
<dbReference type="STRING" id="243232.MJ_1427"/>
<dbReference type="PaxDb" id="243232-MJ_1427"/>
<dbReference type="EnsemblBacteria" id="AAB99449">
    <property type="protein sequence ID" value="AAB99449"/>
    <property type="gene ID" value="MJ_1427"/>
</dbReference>
<dbReference type="GeneID" id="1452331"/>
<dbReference type="KEGG" id="mja:MJ_1427"/>
<dbReference type="eggNOG" id="arCOG01026">
    <property type="taxonomic scope" value="Archaea"/>
</dbReference>
<dbReference type="HOGENOM" id="CLU_061764_0_0_2"/>
<dbReference type="InParanoid" id="Q58822"/>
<dbReference type="OrthoDB" id="85156at2157"/>
<dbReference type="PhylomeDB" id="Q58822"/>
<dbReference type="BioCyc" id="MetaCyc:MONOMER-14546"/>
<dbReference type="BRENDA" id="2.4.2.54">
    <property type="organism ID" value="3260"/>
</dbReference>
<dbReference type="UniPathway" id="UPA00065"/>
<dbReference type="Proteomes" id="UP000000805">
    <property type="component" value="Chromosome"/>
</dbReference>
<dbReference type="GO" id="GO:0005524">
    <property type="term" value="F:ATP binding"/>
    <property type="evidence" value="ECO:0007669"/>
    <property type="project" value="InterPro"/>
</dbReference>
<dbReference type="GO" id="GO:0043793">
    <property type="term" value="F:beta-ribofuranosylaminobenzene 5'-phosphate synthase activity"/>
    <property type="evidence" value="ECO:0007669"/>
    <property type="project" value="UniProtKB-EC"/>
</dbReference>
<dbReference type="Gene3D" id="3.30.230.10">
    <property type="match status" value="1"/>
</dbReference>
<dbReference type="InterPro" id="IPR053442">
    <property type="entry name" value="Beta-RFA-P_synthase"/>
</dbReference>
<dbReference type="InterPro" id="IPR006204">
    <property type="entry name" value="GHMP_kinase_N_dom"/>
</dbReference>
<dbReference type="InterPro" id="IPR004422">
    <property type="entry name" value="RFAP_synthase"/>
</dbReference>
<dbReference type="InterPro" id="IPR020568">
    <property type="entry name" value="Ribosomal_Su5_D2-typ_SF"/>
</dbReference>
<dbReference type="InterPro" id="IPR014721">
    <property type="entry name" value="Ribsml_uS5_D2-typ_fold_subgr"/>
</dbReference>
<dbReference type="NCBIfam" id="TIGR00144">
    <property type="entry name" value="beta_RFAP_syn"/>
    <property type="match status" value="1"/>
</dbReference>
<dbReference type="NCBIfam" id="NF040726">
    <property type="entry name" value="BetaRFA-P_synth"/>
    <property type="match status" value="1"/>
</dbReference>
<dbReference type="PANTHER" id="PTHR20861:SF6">
    <property type="entry name" value="BETA-RIBOFURANOSYLPHENOL 5'-PHOSPHATE SYNTHASE"/>
    <property type="match status" value="1"/>
</dbReference>
<dbReference type="PANTHER" id="PTHR20861">
    <property type="entry name" value="HOMOSERINE/4-DIPHOSPHOCYTIDYL-2-C-METHYL-D-ERYTHRITOL KINASE"/>
    <property type="match status" value="1"/>
</dbReference>
<dbReference type="Pfam" id="PF00288">
    <property type="entry name" value="GHMP_kinases_N"/>
    <property type="match status" value="1"/>
</dbReference>
<dbReference type="PIRSF" id="PIRSF004884">
    <property type="entry name" value="Sugar_kin_arch"/>
    <property type="match status" value="1"/>
</dbReference>
<dbReference type="SUPFAM" id="SSF54211">
    <property type="entry name" value="Ribosomal protein S5 domain 2-like"/>
    <property type="match status" value="1"/>
</dbReference>
<protein>
    <recommendedName>
        <fullName evidence="5">Beta-ribofuranosylphenol 5'-phosphate synthase</fullName>
        <ecNumber evidence="2">2.4.2.54</ecNumber>
    </recommendedName>
    <alternativeName>
        <fullName evidence="5">Beta-ribofuranosylaminobenzene 5'-phosphate synthase</fullName>
        <shortName evidence="3">Beta-RFA-P synthase</shortName>
    </alternativeName>
    <alternativeName>
        <fullName evidence="5">Beta-ribofuranosylhydroxybenzene 5'-phosphate synthase</fullName>
        <shortName evidence="4">Beta-RFH-P synthase</shortName>
    </alternativeName>
</protein>
<gene>
    <name type="ordered locus">MJ1427</name>
</gene>
<keyword id="KW-0328">Glycosyltransferase</keyword>
<keyword id="KW-0460">Magnesium</keyword>
<keyword id="KW-1185">Reference proteome</keyword>
<keyword id="KW-0808">Transferase</keyword>
<sequence>MIIQTPSRIHMGLIDLNGSIGRVDGGIGLALEEPNIKIEGKESDDISIEFDKKLIEKYGEDYIKSVRDRVYNTAIKVLDVIGGEGVDLKILSLFPAHSGLGSGTQLSLAVGKLISKIYNKEMNAYNIAKITGRGGTSGIGIGAFEYGGFLIDGGHSFGKGKDKEDFRPSSASKGVKPAPIIFRHDFDWETILIIPKGEHVYGKKEVDIFKKYCPVPLNEVEKICHLVLMKMMPAVVEKNLDDFGEVINKLQYLGFKKVELSLQSDIVKDLINELHKDVYAGLSSFGPTIYAFGDKKLIVEKANDIFDKYGVYGEIIITKANNVGHKIW</sequence>